<accession>B8D7L3</accession>
<reference key="1">
    <citation type="journal article" date="2009" name="Science">
        <title>The dynamics and time scale of ongoing genomic erosion in symbiotic bacteria.</title>
        <authorList>
            <person name="Moran N.A."/>
            <person name="McLaughlin H.J."/>
            <person name="Sorek R."/>
        </authorList>
    </citation>
    <scope>NUCLEOTIDE SEQUENCE [LARGE SCALE GENOMIC DNA]</scope>
    <source>
        <strain>Tuc7</strain>
    </source>
</reference>
<protein>
    <recommendedName>
        <fullName evidence="1">Protease HtpX</fullName>
        <ecNumber evidence="1">3.4.24.-</ecNumber>
    </recommendedName>
    <alternativeName>
        <fullName evidence="1">Heat shock protein HtpX</fullName>
    </alternativeName>
</protein>
<sequence length="292" mass="32762">MTRIVLFLLTNLAVMLIFSLILFLTGIQSNTIYGLLIMSGLFGFSGSILSLILSKWIALRSVNGEIITHPRNEVESWLINTVRQQSIQKGIIMPQIAVYHATDINAFATGARRNSALIAVSTGLLENMTHHEAEAVIAHEISHIANGDMITMTLVQGVVNTFVIFISRFLSQIISNVMSSNRNENNTEEKNSFVYFLVSTFLELIFGILASIITMWFSRHREFYADASSAKMVGREKMIAALNRLKTSHEPQESDSMIAFCINGKSKSFLKLFASHPSLENRIEALYNQEYM</sequence>
<proteinExistence type="inferred from homology"/>
<evidence type="ECO:0000255" key="1">
    <source>
        <dbReference type="HAMAP-Rule" id="MF_00188"/>
    </source>
</evidence>
<organism>
    <name type="scientific">Buchnera aphidicola subsp. Acyrthosiphon pisum (strain Tuc7)</name>
    <dbReference type="NCBI Taxonomy" id="561501"/>
    <lineage>
        <taxon>Bacteria</taxon>
        <taxon>Pseudomonadati</taxon>
        <taxon>Pseudomonadota</taxon>
        <taxon>Gammaproteobacteria</taxon>
        <taxon>Enterobacterales</taxon>
        <taxon>Erwiniaceae</taxon>
        <taxon>Buchnera</taxon>
    </lineage>
</organism>
<dbReference type="EC" id="3.4.24.-" evidence="1"/>
<dbReference type="EMBL" id="CP001158">
    <property type="protein sequence ID" value="ACL30128.1"/>
    <property type="molecule type" value="Genomic_DNA"/>
</dbReference>
<dbReference type="RefSeq" id="WP_009874275.1">
    <property type="nucleotide sequence ID" value="NC_011834.1"/>
</dbReference>
<dbReference type="SMR" id="B8D7L3"/>
<dbReference type="MEROPS" id="M48.002"/>
<dbReference type="KEGG" id="bau:BUAPTUC7_315"/>
<dbReference type="HOGENOM" id="CLU_042266_1_0_6"/>
<dbReference type="GO" id="GO:0005886">
    <property type="term" value="C:plasma membrane"/>
    <property type="evidence" value="ECO:0007669"/>
    <property type="project" value="UniProtKB-SubCell"/>
</dbReference>
<dbReference type="GO" id="GO:0004222">
    <property type="term" value="F:metalloendopeptidase activity"/>
    <property type="evidence" value="ECO:0007669"/>
    <property type="project" value="UniProtKB-UniRule"/>
</dbReference>
<dbReference type="GO" id="GO:0008270">
    <property type="term" value="F:zinc ion binding"/>
    <property type="evidence" value="ECO:0007669"/>
    <property type="project" value="UniProtKB-UniRule"/>
</dbReference>
<dbReference type="GO" id="GO:0006508">
    <property type="term" value="P:proteolysis"/>
    <property type="evidence" value="ECO:0007669"/>
    <property type="project" value="UniProtKB-KW"/>
</dbReference>
<dbReference type="CDD" id="cd07335">
    <property type="entry name" value="M48B_HtpX_like"/>
    <property type="match status" value="1"/>
</dbReference>
<dbReference type="FunFam" id="3.30.2010.10:FF:000001">
    <property type="entry name" value="Protease HtpX"/>
    <property type="match status" value="1"/>
</dbReference>
<dbReference type="Gene3D" id="3.30.2010.10">
    <property type="entry name" value="Metalloproteases ('zincins'), catalytic domain"/>
    <property type="match status" value="1"/>
</dbReference>
<dbReference type="HAMAP" id="MF_00188">
    <property type="entry name" value="Pept_M48_protease_HtpX"/>
    <property type="match status" value="1"/>
</dbReference>
<dbReference type="InterPro" id="IPR050083">
    <property type="entry name" value="HtpX_protease"/>
</dbReference>
<dbReference type="InterPro" id="IPR022919">
    <property type="entry name" value="Pept_M48_protease_HtpX"/>
</dbReference>
<dbReference type="InterPro" id="IPR001915">
    <property type="entry name" value="Peptidase_M48"/>
</dbReference>
<dbReference type="NCBIfam" id="NF003965">
    <property type="entry name" value="PRK05457.1"/>
    <property type="match status" value="1"/>
</dbReference>
<dbReference type="PANTHER" id="PTHR43221">
    <property type="entry name" value="PROTEASE HTPX"/>
    <property type="match status" value="1"/>
</dbReference>
<dbReference type="PANTHER" id="PTHR43221:SF1">
    <property type="entry name" value="PROTEASE HTPX"/>
    <property type="match status" value="1"/>
</dbReference>
<dbReference type="Pfam" id="PF01435">
    <property type="entry name" value="Peptidase_M48"/>
    <property type="match status" value="1"/>
</dbReference>
<feature type="chain" id="PRO_1000124223" description="Protease HtpX">
    <location>
        <begin position="1"/>
        <end position="292"/>
    </location>
</feature>
<feature type="transmembrane region" description="Helical" evidence="1">
    <location>
        <begin position="4"/>
        <end position="24"/>
    </location>
</feature>
<feature type="transmembrane region" description="Helical" evidence="1">
    <location>
        <begin position="32"/>
        <end position="52"/>
    </location>
</feature>
<feature type="transmembrane region" description="Helical" evidence="1">
    <location>
        <begin position="147"/>
        <end position="167"/>
    </location>
</feature>
<feature type="transmembrane region" description="Helical" evidence="1">
    <location>
        <begin position="193"/>
        <end position="213"/>
    </location>
</feature>
<feature type="active site" evidence="1">
    <location>
        <position position="140"/>
    </location>
</feature>
<feature type="binding site" evidence="1">
    <location>
        <position position="139"/>
    </location>
    <ligand>
        <name>Zn(2+)</name>
        <dbReference type="ChEBI" id="CHEBI:29105"/>
        <note>catalytic</note>
    </ligand>
</feature>
<feature type="binding site" evidence="1">
    <location>
        <position position="143"/>
    </location>
    <ligand>
        <name>Zn(2+)</name>
        <dbReference type="ChEBI" id="CHEBI:29105"/>
        <note>catalytic</note>
    </ligand>
</feature>
<feature type="binding site" evidence="1">
    <location>
        <position position="222"/>
    </location>
    <ligand>
        <name>Zn(2+)</name>
        <dbReference type="ChEBI" id="CHEBI:29105"/>
        <note>catalytic</note>
    </ligand>
</feature>
<comment type="cofactor">
    <cofactor evidence="1">
        <name>Zn(2+)</name>
        <dbReference type="ChEBI" id="CHEBI:29105"/>
    </cofactor>
    <text evidence="1">Binds 1 zinc ion per subunit.</text>
</comment>
<comment type="subcellular location">
    <subcellularLocation>
        <location evidence="1">Cell membrane</location>
        <topology evidence="1">Multi-pass membrane protein</topology>
    </subcellularLocation>
</comment>
<comment type="similarity">
    <text evidence="1">Belongs to the peptidase M48B family.</text>
</comment>
<keyword id="KW-1003">Cell membrane</keyword>
<keyword id="KW-0378">Hydrolase</keyword>
<keyword id="KW-0472">Membrane</keyword>
<keyword id="KW-0479">Metal-binding</keyword>
<keyword id="KW-0482">Metalloprotease</keyword>
<keyword id="KW-0645">Protease</keyword>
<keyword id="KW-0346">Stress response</keyword>
<keyword id="KW-0812">Transmembrane</keyword>
<keyword id="KW-1133">Transmembrane helix</keyword>
<keyword id="KW-0862">Zinc</keyword>
<gene>
    <name evidence="1" type="primary">htpX</name>
    <name type="ordered locus">BUAPTUC7_315</name>
</gene>
<name>HTPX_BUCAT</name>